<proteinExistence type="inferred from homology"/>
<name>RIR1_HHV6Z</name>
<feature type="chain" id="PRO_0000408414" description="Ribonucleoside-diphosphate reductase large subunit-like protein">
    <location>
        <begin position="1"/>
        <end position="804"/>
    </location>
</feature>
<accession>Q9QJ39</accession>
<gene>
    <name evidence="1" type="primary">RIR1</name>
    <name type="synonym">U28</name>
</gene>
<protein>
    <recommendedName>
        <fullName evidence="1">Ribonucleoside-diphosphate reductase large subunit-like protein</fullName>
    </recommendedName>
</protein>
<evidence type="ECO:0000255" key="1">
    <source>
        <dbReference type="HAMAP-Rule" id="MF_04027"/>
    </source>
</evidence>
<organism>
    <name type="scientific">Human herpesvirus 6B (strain Z29)</name>
    <name type="common">HHV-6 variant B</name>
    <name type="synonym">Human B lymphotropic virus</name>
    <dbReference type="NCBI Taxonomy" id="36351"/>
    <lineage>
        <taxon>Viruses</taxon>
        <taxon>Duplodnaviria</taxon>
        <taxon>Heunggongvirae</taxon>
        <taxon>Peploviricota</taxon>
        <taxon>Herviviricetes</taxon>
        <taxon>Herpesvirales</taxon>
        <taxon>Orthoherpesviridae</taxon>
        <taxon>Betaherpesvirinae</taxon>
        <taxon>Roseolovirus</taxon>
        <taxon>Roseolovirus humanbeta6b</taxon>
        <taxon>Human herpesvirus 6B</taxon>
    </lineage>
</organism>
<reference key="1">
    <citation type="journal article" date="1999" name="J. Virol.">
        <title>Human herpesvirus 6B genome sequence: coding content and comparison with human herpesvirus 6A.</title>
        <authorList>
            <person name="Dominguez G."/>
            <person name="Dambaugh T.R."/>
            <person name="Stamey F.R."/>
            <person name="Dewhurst S."/>
            <person name="Inoue N."/>
            <person name="Pellett P.E."/>
        </authorList>
    </citation>
    <scope>NUCLEOTIDE SEQUENCE [LARGE SCALE GENOMIC DNA]</scope>
</reference>
<comment type="function">
    <text evidence="1">Does not possess a ribonucleotide reductase activity. Betaherpesviruses probably use another strategy to expand the dNTP pool in a quiescent host cell.</text>
</comment>
<comment type="subunit">
    <text>The genome of human herpesvirus-6 does not code for a ribonucleotide reductase small subunit.</text>
</comment>
<comment type="subcellular location">
    <subcellularLocation>
        <location evidence="1">Virion</location>
    </subcellularLocation>
    <subcellularLocation>
        <location evidence="1">Host cytoplasm</location>
    </subcellularLocation>
</comment>
<comment type="similarity">
    <text evidence="1">Belongs to the ribonucleoside diphosphate reductase large chain family.</text>
</comment>
<comment type="caution">
    <text evidence="1">Lacks the conserved sequence Asn-x-Cys-x-Glu essential for ribonucleotide reductase activity.</text>
</comment>
<keyword id="KW-1035">Host cytoplasm</keyword>
<keyword id="KW-0426">Late protein</keyword>
<keyword id="KW-1185">Reference proteome</keyword>
<keyword id="KW-0946">Virion</keyword>
<organismHost>
    <name type="scientific">Homo sapiens</name>
    <name type="common">Human</name>
    <dbReference type="NCBI Taxonomy" id="9606"/>
</organismHost>
<dbReference type="EMBL" id="AF157706">
    <property type="protein sequence ID" value="AAD49642.1"/>
    <property type="molecule type" value="Genomic_DNA"/>
</dbReference>
<dbReference type="RefSeq" id="NP_050209.1">
    <property type="nucleotide sequence ID" value="NC_000898.1"/>
</dbReference>
<dbReference type="SMR" id="Q9QJ39"/>
<dbReference type="DNASU" id="1497030"/>
<dbReference type="GeneID" id="1497030"/>
<dbReference type="KEGG" id="vg:1497030"/>
<dbReference type="Proteomes" id="UP000006930">
    <property type="component" value="Segment"/>
</dbReference>
<dbReference type="GO" id="GO:0030430">
    <property type="term" value="C:host cell cytoplasm"/>
    <property type="evidence" value="ECO:0007669"/>
    <property type="project" value="UniProtKB-SubCell"/>
</dbReference>
<dbReference type="GO" id="GO:0044423">
    <property type="term" value="C:virion component"/>
    <property type="evidence" value="ECO:0007669"/>
    <property type="project" value="UniProtKB-UniRule"/>
</dbReference>
<dbReference type="GO" id="GO:0005524">
    <property type="term" value="F:ATP binding"/>
    <property type="evidence" value="ECO:0007669"/>
    <property type="project" value="TreeGrafter"/>
</dbReference>
<dbReference type="GO" id="GO:0004748">
    <property type="term" value="F:ribonucleoside-diphosphate reductase activity, thioredoxin disulfide as acceptor"/>
    <property type="evidence" value="ECO:0007669"/>
    <property type="project" value="TreeGrafter"/>
</dbReference>
<dbReference type="GO" id="GO:0009263">
    <property type="term" value="P:deoxyribonucleotide biosynthetic process"/>
    <property type="evidence" value="ECO:0007669"/>
    <property type="project" value="TreeGrafter"/>
</dbReference>
<dbReference type="Gene3D" id="3.20.70.20">
    <property type="match status" value="1"/>
</dbReference>
<dbReference type="HAMAP" id="MF_04027">
    <property type="entry name" value="HSV_RIR1_betahv"/>
    <property type="match status" value="1"/>
</dbReference>
<dbReference type="InterPro" id="IPR034716">
    <property type="entry name" value="HSV_RIR1_betahv"/>
</dbReference>
<dbReference type="InterPro" id="IPR013346">
    <property type="entry name" value="NrdE_NrdA_C"/>
</dbReference>
<dbReference type="InterPro" id="IPR000788">
    <property type="entry name" value="RNR_lg_C"/>
</dbReference>
<dbReference type="InterPro" id="IPR039718">
    <property type="entry name" value="Rrm1"/>
</dbReference>
<dbReference type="PANTHER" id="PTHR11573">
    <property type="entry name" value="RIBONUCLEOSIDE-DIPHOSPHATE REDUCTASE LARGE CHAIN"/>
    <property type="match status" value="1"/>
</dbReference>
<dbReference type="PANTHER" id="PTHR11573:SF6">
    <property type="entry name" value="RIBONUCLEOSIDE-DIPHOSPHATE REDUCTASE LARGE SUBUNIT"/>
    <property type="match status" value="1"/>
</dbReference>
<dbReference type="Pfam" id="PF02867">
    <property type="entry name" value="Ribonuc_red_lgC"/>
    <property type="match status" value="1"/>
</dbReference>
<dbReference type="PRINTS" id="PR01183">
    <property type="entry name" value="RIBORDTASEM1"/>
</dbReference>
<dbReference type="SUPFAM" id="SSF51998">
    <property type="entry name" value="PFL-like glycyl radical enzymes"/>
    <property type="match status" value="1"/>
</dbReference>
<dbReference type="PROSITE" id="PS00089">
    <property type="entry name" value="RIBORED_LARGE"/>
    <property type="match status" value="1"/>
</dbReference>
<sequence>MKRKERRINKDFGYNRKCVCHYEASQKRFCYSQYSCASVLYERVRDIAKIMDRLDSGLDAWCLRDAIISVLRATHCVPRVDRMLGRWYLKTSIFYDFCPDDLILSCPNVIMPNVLNFVKKYRDFIRSVLYKVSVSWKNQYMPGVLGASRFLEEISNSLNGVEESIPCIYLRMCATLTEIVLRNGYLREIYQENPYVIFEELAFSLFTQKWVLPFSCMTNLGLVEKANSTVFDVAIYNTCLYSLADFITVNGEHLFPALLNGSNISMNVTRYQQEAKNIFEILLSQIQVVERDTDKTVQLTVYVEVWHVSALTWLDLYQVLPETSRVTFCLIIPGIFMDRYELKRAQWSLFHKNIAFELGKCDEVTFSTKYLEFERTTDHAKITMASFVEKICRCLKRGRMGLIFRKNVYQYSMIPHVPLYCGGDFLDVLPVRDGINTCLRMLLNVVHFLGDEVSDELTEEIDFVRLQCKFFMFNELRRVVRKMVLVANAVIDYAVDNKDFLREGIVDGRSLGICITGLHSVFMTVGLSYAHPDACRLYRMMCEHIYYTCVRTSVDCCMKGAEPCNLFDRSKYALGMLYFDQFDNVECTLPEELWTTLRKDVLMHGVRNIHFTAGTAMQKEFDIINSSESFWPMEDNKILRRSNIKVVIGKDGLNDVTSVYSSELKSLYIPVYNNLLLNRFNKHQQYLKTVGYRVLNVDTNLFTDKELDDLAVFKDGFSYPLNDLIEMYKSGLPFLDQGQANVFYFNDTVSLKHLLPLLYKTGFKVAMYKVLCSSEMYKHLDLSNPLPLIGKCSDGVVMHVKNIL</sequence>